<sequence length="192" mass="21528">MKYAPLSRDEGRTLVKIARMAIEEHLRGSKNLRLPDDLPDVFRQRRGVFVTLEKKGNLRGCIGYPEPVKPLIDALIEAAISAATGDPRFPPVKPEELDDIDVEVSVLTPPEPLEVESPADYPSLIRVGVDGLIVERGWARGLLLPQVATEWGWDAEEFLCNTCMKAGLPPDCFYDPETRVYRFQAQIFHEDG</sequence>
<name>Y857_METTH</name>
<accession>O26945</accession>
<gene>
    <name type="ordered locus">MTH_857</name>
</gene>
<proteinExistence type="inferred from homology"/>
<feature type="chain" id="PRO_0000142380" description="Protein MTH_857">
    <location>
        <begin position="1"/>
        <end position="192"/>
    </location>
</feature>
<feature type="domain" description="AMMECR1" evidence="1">
    <location>
        <begin position="9"/>
        <end position="192"/>
    </location>
</feature>
<evidence type="ECO:0000255" key="1">
    <source>
        <dbReference type="HAMAP-Rule" id="MF_00645"/>
    </source>
</evidence>
<organism>
    <name type="scientific">Methanothermobacter thermautotrophicus (strain ATCC 29096 / DSM 1053 / JCM 10044 / NBRC 100330 / Delta H)</name>
    <name type="common">Methanobacterium thermoautotrophicum</name>
    <dbReference type="NCBI Taxonomy" id="187420"/>
    <lineage>
        <taxon>Archaea</taxon>
        <taxon>Methanobacteriati</taxon>
        <taxon>Methanobacteriota</taxon>
        <taxon>Methanomada group</taxon>
        <taxon>Methanobacteria</taxon>
        <taxon>Methanobacteriales</taxon>
        <taxon>Methanobacteriaceae</taxon>
        <taxon>Methanothermobacter</taxon>
    </lineage>
</organism>
<protein>
    <recommendedName>
        <fullName evidence="1">Protein MTH_857</fullName>
    </recommendedName>
</protein>
<keyword id="KW-1185">Reference proteome</keyword>
<dbReference type="EMBL" id="AE000666">
    <property type="protein sequence ID" value="AAB85355.1"/>
    <property type="molecule type" value="Genomic_DNA"/>
</dbReference>
<dbReference type="PIR" id="D69214">
    <property type="entry name" value="D69214"/>
</dbReference>
<dbReference type="RefSeq" id="WP_010876490.1">
    <property type="nucleotide sequence ID" value="NC_000916.1"/>
</dbReference>
<dbReference type="SMR" id="O26945"/>
<dbReference type="FunCoup" id="O26945">
    <property type="interactions" value="74"/>
</dbReference>
<dbReference type="STRING" id="187420.MTH_857"/>
<dbReference type="PaxDb" id="187420-MTH_857"/>
<dbReference type="EnsemblBacteria" id="AAB85355">
    <property type="protein sequence ID" value="AAB85355"/>
    <property type="gene ID" value="MTH_857"/>
</dbReference>
<dbReference type="GeneID" id="1471265"/>
<dbReference type="KEGG" id="mth:MTH_857"/>
<dbReference type="PATRIC" id="fig|187420.15.peg.842"/>
<dbReference type="HOGENOM" id="CLU_095686_1_1_2"/>
<dbReference type="InParanoid" id="O26945"/>
<dbReference type="Proteomes" id="UP000005223">
    <property type="component" value="Chromosome"/>
</dbReference>
<dbReference type="Gene3D" id="3.30.700.20">
    <property type="entry name" value="Hypothetical protein ph0010, domain 1"/>
    <property type="match status" value="1"/>
</dbReference>
<dbReference type="Gene3D" id="3.30.1490.150">
    <property type="entry name" value="Hypothetical protein ph0010, domain 2"/>
    <property type="match status" value="1"/>
</dbReference>
<dbReference type="HAMAP" id="MF_00645">
    <property type="entry name" value="AMMECR1"/>
    <property type="match status" value="1"/>
</dbReference>
<dbReference type="InterPro" id="IPR023473">
    <property type="entry name" value="AMMECR1"/>
</dbReference>
<dbReference type="InterPro" id="IPR036071">
    <property type="entry name" value="AMMECR1_dom_sf"/>
</dbReference>
<dbReference type="InterPro" id="IPR002733">
    <property type="entry name" value="AMMECR1_domain"/>
</dbReference>
<dbReference type="InterPro" id="IPR027485">
    <property type="entry name" value="AMMECR1_N"/>
</dbReference>
<dbReference type="InterPro" id="IPR027623">
    <property type="entry name" value="AmmeMemoSam_A"/>
</dbReference>
<dbReference type="InterPro" id="IPR023472">
    <property type="entry name" value="Uncharacterised_MJ0810"/>
</dbReference>
<dbReference type="NCBIfam" id="TIGR04335">
    <property type="entry name" value="AmmeMemoSam_A"/>
    <property type="match status" value="1"/>
</dbReference>
<dbReference type="NCBIfam" id="TIGR00296">
    <property type="entry name" value="TIGR00296 family protein"/>
    <property type="match status" value="1"/>
</dbReference>
<dbReference type="PANTHER" id="PTHR13016:SF0">
    <property type="entry name" value="AMME SYNDROME CANDIDATE GENE 1 PROTEIN"/>
    <property type="match status" value="1"/>
</dbReference>
<dbReference type="PANTHER" id="PTHR13016">
    <property type="entry name" value="AMMECR1 HOMOLOG"/>
    <property type="match status" value="1"/>
</dbReference>
<dbReference type="Pfam" id="PF01871">
    <property type="entry name" value="AMMECR1"/>
    <property type="match status" value="1"/>
</dbReference>
<dbReference type="SUPFAM" id="SSF143447">
    <property type="entry name" value="AMMECR1-like"/>
    <property type="match status" value="1"/>
</dbReference>
<dbReference type="PROSITE" id="PS51112">
    <property type="entry name" value="AMMECR1"/>
    <property type="match status" value="1"/>
</dbReference>
<reference key="1">
    <citation type="journal article" date="1997" name="J. Bacteriol.">
        <title>Complete genome sequence of Methanobacterium thermoautotrophicum deltaH: functional analysis and comparative genomics.</title>
        <authorList>
            <person name="Smith D.R."/>
            <person name="Doucette-Stamm L.A."/>
            <person name="Deloughery C."/>
            <person name="Lee H.-M."/>
            <person name="Dubois J."/>
            <person name="Aldredge T."/>
            <person name="Bashirzadeh R."/>
            <person name="Blakely D."/>
            <person name="Cook R."/>
            <person name="Gilbert K."/>
            <person name="Harrison D."/>
            <person name="Hoang L."/>
            <person name="Keagle P."/>
            <person name="Lumm W."/>
            <person name="Pothier B."/>
            <person name="Qiu D."/>
            <person name="Spadafora R."/>
            <person name="Vicare R."/>
            <person name="Wang Y."/>
            <person name="Wierzbowski J."/>
            <person name="Gibson R."/>
            <person name="Jiwani N."/>
            <person name="Caruso A."/>
            <person name="Bush D."/>
            <person name="Safer H."/>
            <person name="Patwell D."/>
            <person name="Prabhakar S."/>
            <person name="McDougall S."/>
            <person name="Shimer G."/>
            <person name="Goyal A."/>
            <person name="Pietrovski S."/>
            <person name="Church G.M."/>
            <person name="Daniels C.J."/>
            <person name="Mao J.-I."/>
            <person name="Rice P."/>
            <person name="Noelling J."/>
            <person name="Reeve J.N."/>
        </authorList>
    </citation>
    <scope>NUCLEOTIDE SEQUENCE [LARGE SCALE GENOMIC DNA]</scope>
    <source>
        <strain>ATCC 29096 / DSM 1053 / JCM 10044 / NBRC 100330 / Delta H</strain>
    </source>
</reference>